<keyword id="KW-0158">Chromosome</keyword>
<keyword id="KW-0238">DNA-binding</keyword>
<keyword id="KW-0539">Nucleus</keyword>
<keyword id="KW-1185">Reference proteome</keyword>
<proteinExistence type="inferred from homology"/>
<reference key="1">
    <citation type="journal article" date="1994" name="Eur. J. Biochem.">
        <title>Molecular cloning, sequence analysis and differential expression of an intron-containing gene encoding tomato histone H1.</title>
        <authorList>
            <person name="Jayawardene N."/>
            <person name="Riggs C.D."/>
        </authorList>
    </citation>
    <scope>NUCLEOTIDE SEQUENCE [GENOMIC DNA]</scope>
    <source>
        <strain>cv. UC82B</strain>
    </source>
</reference>
<evidence type="ECO:0000255" key="1">
    <source>
        <dbReference type="PROSITE-ProRule" id="PRU00837"/>
    </source>
</evidence>
<evidence type="ECO:0000256" key="2">
    <source>
        <dbReference type="SAM" id="MobiDB-lite"/>
    </source>
</evidence>
<name>H1_SOLLC</name>
<dbReference type="EMBL" id="U03391">
    <property type="protein sequence ID" value="AAA50578.1"/>
    <property type="molecule type" value="Genomic_DNA"/>
</dbReference>
<dbReference type="PIR" id="S45662">
    <property type="entry name" value="S45662"/>
</dbReference>
<dbReference type="RefSeq" id="NP_001296308.1">
    <property type="nucleotide sequence ID" value="NM_001309379.1"/>
</dbReference>
<dbReference type="SMR" id="P37218"/>
<dbReference type="STRING" id="4081.P37218"/>
<dbReference type="PaxDb" id="4081-Solyc09g066100.2.1"/>
<dbReference type="EnsemblPlants" id="Solyc09g066100.3.1">
    <property type="protein sequence ID" value="Solyc09g066100.3.1"/>
    <property type="gene ID" value="Solyc09g066100.3"/>
</dbReference>
<dbReference type="GeneID" id="101248710"/>
<dbReference type="Gramene" id="Solyc09g066100.3.1">
    <property type="protein sequence ID" value="Solyc09g066100.3.1"/>
    <property type="gene ID" value="Solyc09g066100.3"/>
</dbReference>
<dbReference type="KEGG" id="sly:101248710"/>
<dbReference type="eggNOG" id="ENOG502RXWQ">
    <property type="taxonomic scope" value="Eukaryota"/>
</dbReference>
<dbReference type="HOGENOM" id="CLU_052897_5_0_1"/>
<dbReference type="InParanoid" id="P37218"/>
<dbReference type="OMA" id="PTMVNAH"/>
<dbReference type="OrthoDB" id="1110759at2759"/>
<dbReference type="Proteomes" id="UP000004994">
    <property type="component" value="Chromosome 9"/>
</dbReference>
<dbReference type="GO" id="GO:0000786">
    <property type="term" value="C:nucleosome"/>
    <property type="evidence" value="ECO:0007669"/>
    <property type="project" value="InterPro"/>
</dbReference>
<dbReference type="GO" id="GO:0005634">
    <property type="term" value="C:nucleus"/>
    <property type="evidence" value="ECO:0000318"/>
    <property type="project" value="GO_Central"/>
</dbReference>
<dbReference type="GO" id="GO:0003690">
    <property type="term" value="F:double-stranded DNA binding"/>
    <property type="evidence" value="ECO:0000318"/>
    <property type="project" value="GO_Central"/>
</dbReference>
<dbReference type="GO" id="GO:0031492">
    <property type="term" value="F:nucleosomal DNA binding"/>
    <property type="evidence" value="ECO:0000318"/>
    <property type="project" value="GO_Central"/>
</dbReference>
<dbReference type="GO" id="GO:0030527">
    <property type="term" value="F:structural constituent of chromatin"/>
    <property type="evidence" value="ECO:0007669"/>
    <property type="project" value="InterPro"/>
</dbReference>
<dbReference type="GO" id="GO:0030261">
    <property type="term" value="P:chromosome condensation"/>
    <property type="evidence" value="ECO:0000318"/>
    <property type="project" value="GO_Central"/>
</dbReference>
<dbReference type="GO" id="GO:0045910">
    <property type="term" value="P:negative regulation of DNA recombination"/>
    <property type="evidence" value="ECO:0000318"/>
    <property type="project" value="GO_Central"/>
</dbReference>
<dbReference type="GO" id="GO:0006334">
    <property type="term" value="P:nucleosome assembly"/>
    <property type="evidence" value="ECO:0007669"/>
    <property type="project" value="InterPro"/>
</dbReference>
<dbReference type="CDD" id="cd00073">
    <property type="entry name" value="H15"/>
    <property type="match status" value="1"/>
</dbReference>
<dbReference type="FunFam" id="1.10.10.10:FF:000521">
    <property type="entry name" value="Histone H1"/>
    <property type="match status" value="1"/>
</dbReference>
<dbReference type="Gene3D" id="1.10.10.10">
    <property type="entry name" value="Winged helix-like DNA-binding domain superfamily/Winged helix DNA-binding domain"/>
    <property type="match status" value="1"/>
</dbReference>
<dbReference type="InterPro" id="IPR005819">
    <property type="entry name" value="H1/H5"/>
</dbReference>
<dbReference type="InterPro" id="IPR005818">
    <property type="entry name" value="Histone_H1/H5_H15"/>
</dbReference>
<dbReference type="InterPro" id="IPR036388">
    <property type="entry name" value="WH-like_DNA-bd_sf"/>
</dbReference>
<dbReference type="InterPro" id="IPR036390">
    <property type="entry name" value="WH_DNA-bd_sf"/>
</dbReference>
<dbReference type="PANTHER" id="PTHR11467">
    <property type="entry name" value="HISTONE H1"/>
    <property type="match status" value="1"/>
</dbReference>
<dbReference type="PANTHER" id="PTHR11467:SF143">
    <property type="entry name" value="HISTONE H1"/>
    <property type="match status" value="1"/>
</dbReference>
<dbReference type="Pfam" id="PF00538">
    <property type="entry name" value="Linker_histone"/>
    <property type="match status" value="1"/>
</dbReference>
<dbReference type="PRINTS" id="PR00624">
    <property type="entry name" value="HISTONEH5"/>
</dbReference>
<dbReference type="SMART" id="SM00526">
    <property type="entry name" value="H15"/>
    <property type="match status" value="1"/>
</dbReference>
<dbReference type="SUPFAM" id="SSF46785">
    <property type="entry name" value="Winged helix' DNA-binding domain"/>
    <property type="match status" value="1"/>
</dbReference>
<dbReference type="PROSITE" id="PS51504">
    <property type="entry name" value="H15"/>
    <property type="match status" value="1"/>
</dbReference>
<protein>
    <recommendedName>
        <fullName>Histone H1</fullName>
    </recommendedName>
</protein>
<sequence>MATEEPVIVNEVVEEQAAPETVKDEANPPAKSGKAKKETKAKKPAAPRKRSATPTHPPYFEMIKDAIVTLKERTGSSQHAITKFIEEKQKSLPSNFKKLLLTQLKKFVASEKLVKVKNSYKLPSGSKPAAAAVPAKKKPAAAKSKPAAKPKAAVKPKAKPAAKAKPAAKAKPAAKAKPAAKAKPAAKAKPAAKAKPVAKAKPKAAAAAKPKAAVKPKAAPAKTKAAVKPNLKAKTTTAKVAKTATRTTPSRKAAPKATPAKKEPVKKAPAKNVKSPAKKATPKRGRK</sequence>
<comment type="function">
    <text>Histones H1 are necessary for the condensation of nucleosome chains into higher-order structures.</text>
</comment>
<comment type="subcellular location">
    <subcellularLocation>
        <location>Nucleus</location>
    </subcellularLocation>
    <subcellularLocation>
        <location>Chromosome</location>
    </subcellularLocation>
</comment>
<comment type="similarity">
    <text evidence="1">Belongs to the histone H1/H5 family.</text>
</comment>
<feature type="chain" id="PRO_0000195952" description="Histone H1">
    <location>
        <begin position="1"/>
        <end position="287"/>
    </location>
</feature>
<feature type="domain" description="H15" evidence="1">
    <location>
        <begin position="55"/>
        <end position="124"/>
    </location>
</feature>
<feature type="region of interest" description="Disordered" evidence="2">
    <location>
        <begin position="1"/>
        <end position="58"/>
    </location>
</feature>
<feature type="region of interest" description="Disordered" evidence="2">
    <location>
        <begin position="120"/>
        <end position="287"/>
    </location>
</feature>
<feature type="compositionally biased region" description="Low complexity" evidence="2">
    <location>
        <begin position="1"/>
        <end position="11"/>
    </location>
</feature>
<feature type="compositionally biased region" description="Basic residues" evidence="2">
    <location>
        <begin position="33"/>
        <end position="51"/>
    </location>
</feature>
<feature type="compositionally biased region" description="Basic residues" evidence="2">
    <location>
        <begin position="135"/>
        <end position="202"/>
    </location>
</feature>
<feature type="compositionally biased region" description="Low complexity" evidence="2">
    <location>
        <begin position="203"/>
        <end position="248"/>
    </location>
</feature>
<feature type="compositionally biased region" description="Basic residues" evidence="2">
    <location>
        <begin position="276"/>
        <end position="287"/>
    </location>
</feature>
<organism>
    <name type="scientific">Solanum lycopersicum</name>
    <name type="common">Tomato</name>
    <name type="synonym">Lycopersicon esculentum</name>
    <dbReference type="NCBI Taxonomy" id="4081"/>
    <lineage>
        <taxon>Eukaryota</taxon>
        <taxon>Viridiplantae</taxon>
        <taxon>Streptophyta</taxon>
        <taxon>Embryophyta</taxon>
        <taxon>Tracheophyta</taxon>
        <taxon>Spermatophyta</taxon>
        <taxon>Magnoliopsida</taxon>
        <taxon>eudicotyledons</taxon>
        <taxon>Gunneridae</taxon>
        <taxon>Pentapetalae</taxon>
        <taxon>asterids</taxon>
        <taxon>lamiids</taxon>
        <taxon>Solanales</taxon>
        <taxon>Solanaceae</taxon>
        <taxon>Solanoideae</taxon>
        <taxon>Solaneae</taxon>
        <taxon>Solanum</taxon>
        <taxon>Solanum subgen. Lycopersicon</taxon>
    </lineage>
</organism>
<accession>P37218</accession>